<organismHost>
    <name type="scientific">Aves</name>
    <dbReference type="NCBI Taxonomy" id="8782"/>
</organismHost>
<organismHost>
    <name type="scientific">Homo sapiens</name>
    <name type="common">Human</name>
    <dbReference type="NCBI Taxonomy" id="9606"/>
</organismHost>
<organismHost>
    <name type="scientific">Sus scrofa</name>
    <name type="common">Pig</name>
    <dbReference type="NCBI Taxonomy" id="9823"/>
</organismHost>
<evidence type="ECO:0000255" key="1">
    <source>
        <dbReference type="HAMAP-Rule" id="MF_04071"/>
    </source>
</evidence>
<evidence type="ECO:0000269" key="2">
    <source>
    </source>
</evidence>
<evidence type="ECO:0007829" key="3">
    <source>
        <dbReference type="PDB" id="3B7E"/>
    </source>
</evidence>
<evidence type="ECO:0007829" key="4">
    <source>
        <dbReference type="PDB" id="6D96"/>
    </source>
</evidence>
<evidence type="ECO:0007829" key="5">
    <source>
        <dbReference type="PDB" id="6LXI"/>
    </source>
</evidence>
<organism>
    <name type="scientific">Influenza A virus (strain A/Brevig Mission/1/1918 H1N1)</name>
    <name type="common">Influenza A virus (strain A/South Carolina/1/1918 H1N1)</name>
    <dbReference type="NCBI Taxonomy" id="88776"/>
    <lineage>
        <taxon>Viruses</taxon>
        <taxon>Riboviria</taxon>
        <taxon>Orthornavirae</taxon>
        <taxon>Negarnaviricota</taxon>
        <taxon>Polyploviricotina</taxon>
        <taxon>Insthoviricetes</taxon>
        <taxon>Articulavirales</taxon>
        <taxon>Orthomyxoviridae</taxon>
        <taxon>Alphainfluenzavirus</taxon>
        <taxon>Alphainfluenzavirus influenzae</taxon>
        <taxon>Influenza A virus</taxon>
    </lineage>
</organism>
<protein>
    <recommendedName>
        <fullName evidence="1">Neuraminidase</fullName>
        <ecNumber evidence="1">3.2.1.18</ecNumber>
    </recommendedName>
</protein>
<reference key="1">
    <citation type="journal article" date="2000" name="Proc. Natl. Acad. Sci. U.S.A.">
        <title>Characterization of the 1918 'Spanish' influenza virus neuraminidase gene.</title>
        <authorList>
            <person name="Reid A.H."/>
            <person name="Fanning T.G."/>
            <person name="Janczewski T.A."/>
            <person name="Taubenberger J.K."/>
        </authorList>
    </citation>
    <scope>NUCLEOTIDE SEQUENCE [MRNA]</scope>
</reference>
<reference key="2">
    <citation type="journal article" date="1997" name="Science">
        <title>Initial genetic characterization of the 1918 'Spanish' influenza virus.</title>
        <authorList>
            <person name="Taubenberger J.K."/>
            <person name="Reid A.H."/>
            <person name="Krafft A.E."/>
            <person name="Bijwaard K.E."/>
            <person name="Fanning T.G."/>
        </authorList>
    </citation>
    <scope>NUCLEOTIDE SEQUENCE [GENOMIC RNA] OF 12-23</scope>
    <source>
        <strain>A/South Carolina/1/18</strain>
    </source>
</reference>
<reference key="3">
    <citation type="journal article" date="2008" name="J. Virol.">
        <title>Structural characterization of the 1918 influenza virus H1N1 neuraminidase.</title>
        <authorList>
            <person name="Xu X."/>
            <person name="Zhu X."/>
            <person name="Dwek R.A."/>
            <person name="Stevens J."/>
            <person name="Wilson I.A."/>
        </authorList>
    </citation>
    <scope>X-RAY CRYSTALLOGRAPHY (1.45 ANGSTROMS) OF 83-467 IN COMPLEX WITH CALCIUM AND INHIBITOR ZANAMIVIR</scope>
    <scope>COFACTOR</scope>
    <scope>SUBUNIT</scope>
    <scope>GLYCOSYLATION AT ASN-146</scope>
    <scope>DISULFIDE BOND</scope>
</reference>
<accession>Q9IGQ6</accession>
<accession>O10421</accession>
<dbReference type="EC" id="3.2.1.18" evidence="1"/>
<dbReference type="EMBL" id="AF250356">
    <property type="protein sequence ID" value="AAF77036.1"/>
    <property type="molecule type" value="mRNA"/>
</dbReference>
<dbReference type="EMBL" id="U94893">
    <property type="protein sequence ID" value="AAC57065.1"/>
    <property type="molecule type" value="Genomic_DNA"/>
</dbReference>
<dbReference type="PDB" id="3B7E">
    <property type="method" value="X-ray"/>
    <property type="resolution" value="1.45 A"/>
    <property type="chains" value="A/B=83-467"/>
</dbReference>
<dbReference type="PDB" id="3BEQ">
    <property type="method" value="X-ray"/>
    <property type="resolution" value="1.64 A"/>
    <property type="chains" value="A/B=83-467"/>
</dbReference>
<dbReference type="PDB" id="3CYE">
    <property type="method" value="X-ray"/>
    <property type="resolution" value="1.65 A"/>
    <property type="chains" value="A/B=83-469"/>
</dbReference>
<dbReference type="PDB" id="6D96">
    <property type="method" value="X-ray"/>
    <property type="resolution" value="2.15 A"/>
    <property type="chains" value="A/B/C/D/E/F/G/H=82-469"/>
</dbReference>
<dbReference type="PDB" id="6LXI">
    <property type="method" value="X-ray"/>
    <property type="resolution" value="2.50 A"/>
    <property type="chains" value="A/B=1-469"/>
</dbReference>
<dbReference type="PDB" id="8E6J">
    <property type="method" value="EM"/>
    <property type="resolution" value="2.70 A"/>
    <property type="chains" value="A/B/C/D=82-469"/>
</dbReference>
<dbReference type="PDB" id="8E6K">
    <property type="method" value="EM"/>
    <property type="resolution" value="3.10 A"/>
    <property type="chains" value="A/B/C/D=82-469"/>
</dbReference>
<dbReference type="PDBsum" id="3B7E"/>
<dbReference type="PDBsum" id="3BEQ"/>
<dbReference type="PDBsum" id="3CYE"/>
<dbReference type="PDBsum" id="6D96"/>
<dbReference type="PDBsum" id="6LXI"/>
<dbReference type="PDBsum" id="8E6J"/>
<dbReference type="PDBsum" id="8E6K"/>
<dbReference type="EMDB" id="EMD-27920"/>
<dbReference type="EMDB" id="EMD-27921"/>
<dbReference type="SMR" id="Q9IGQ6"/>
<dbReference type="BindingDB" id="Q9IGQ6"/>
<dbReference type="ChEMBL" id="CHEMBL1795169"/>
<dbReference type="DrugCentral" id="Q9IGQ6"/>
<dbReference type="CAZy" id="GH34">
    <property type="family name" value="Glycoside Hydrolase Family 34"/>
</dbReference>
<dbReference type="GlyCosmos" id="Q9IGQ6">
    <property type="glycosylation" value="7 sites, No reported glycans"/>
</dbReference>
<dbReference type="iPTMnet" id="Q9IGQ6"/>
<dbReference type="BRENDA" id="3.2.1.18">
    <property type="organism ID" value="7479"/>
</dbReference>
<dbReference type="SABIO-RK" id="Q9IGQ6"/>
<dbReference type="EvolutionaryTrace" id="Q9IGQ6"/>
<dbReference type="PRO" id="PR:Q9IGQ6"/>
<dbReference type="Proteomes" id="UP000008430">
    <property type="component" value="Genome"/>
</dbReference>
<dbReference type="GO" id="GO:0020002">
    <property type="term" value="C:host cell plasma membrane"/>
    <property type="evidence" value="ECO:0007669"/>
    <property type="project" value="UniProtKB-SubCell"/>
</dbReference>
<dbReference type="GO" id="GO:0016020">
    <property type="term" value="C:membrane"/>
    <property type="evidence" value="ECO:0007669"/>
    <property type="project" value="UniProtKB-UniRule"/>
</dbReference>
<dbReference type="GO" id="GO:0055036">
    <property type="term" value="C:virion membrane"/>
    <property type="evidence" value="ECO:0007669"/>
    <property type="project" value="UniProtKB-SubCell"/>
</dbReference>
<dbReference type="GO" id="GO:0004308">
    <property type="term" value="F:exo-alpha-sialidase activity"/>
    <property type="evidence" value="ECO:0007669"/>
    <property type="project" value="UniProtKB-UniRule"/>
</dbReference>
<dbReference type="GO" id="GO:0046872">
    <property type="term" value="F:metal ion binding"/>
    <property type="evidence" value="ECO:0007669"/>
    <property type="project" value="UniProtKB-UniRule"/>
</dbReference>
<dbReference type="GO" id="GO:0005975">
    <property type="term" value="P:carbohydrate metabolic process"/>
    <property type="evidence" value="ECO:0007669"/>
    <property type="project" value="InterPro"/>
</dbReference>
<dbReference type="GO" id="GO:0046761">
    <property type="term" value="P:viral budding from plasma membrane"/>
    <property type="evidence" value="ECO:0007669"/>
    <property type="project" value="UniProtKB-UniRule"/>
</dbReference>
<dbReference type="CDD" id="cd15483">
    <property type="entry name" value="Influenza_NA"/>
    <property type="match status" value="1"/>
</dbReference>
<dbReference type="FunFam" id="2.120.10.10:FF:000001">
    <property type="entry name" value="Neuraminidase"/>
    <property type="match status" value="1"/>
</dbReference>
<dbReference type="Gene3D" id="2.120.10.10">
    <property type="match status" value="1"/>
</dbReference>
<dbReference type="HAMAP" id="MF_04071">
    <property type="entry name" value="INFV_NRAM"/>
    <property type="match status" value="1"/>
</dbReference>
<dbReference type="InterPro" id="IPR001860">
    <property type="entry name" value="Glyco_hydro_34"/>
</dbReference>
<dbReference type="InterPro" id="IPR033654">
    <property type="entry name" value="Sialidase_Influenza_A/B"/>
</dbReference>
<dbReference type="InterPro" id="IPR036278">
    <property type="entry name" value="Sialidase_sf"/>
</dbReference>
<dbReference type="Pfam" id="PF00064">
    <property type="entry name" value="Neur"/>
    <property type="match status" value="1"/>
</dbReference>
<dbReference type="SUPFAM" id="SSF50939">
    <property type="entry name" value="Sialidases"/>
    <property type="match status" value="1"/>
</dbReference>
<feature type="chain" id="PRO_0000310569" description="Neuraminidase">
    <location>
        <begin position="1"/>
        <end position="469"/>
    </location>
</feature>
<feature type="topological domain" description="Intravirion" evidence="1">
    <location>
        <begin position="1"/>
        <end position="6"/>
    </location>
</feature>
<feature type="transmembrane region" description="Helical" evidence="1">
    <location>
        <begin position="7"/>
        <end position="27"/>
    </location>
</feature>
<feature type="topological domain" description="Virion surface" evidence="1">
    <location>
        <begin position="28"/>
        <end position="469"/>
    </location>
</feature>
<feature type="region of interest" description="Involved in apical transport and lipid raft association" evidence="1">
    <location>
        <begin position="11"/>
        <end position="33"/>
    </location>
</feature>
<feature type="region of interest" description="Hypervariable stalk region" evidence="1">
    <location>
        <begin position="36"/>
        <end position="90"/>
    </location>
</feature>
<feature type="region of interest" description="Head of neuraminidase" evidence="1">
    <location>
        <begin position="91"/>
        <end position="469"/>
    </location>
</feature>
<feature type="active site" description="Proton donor/acceptor" evidence="1">
    <location>
        <position position="151"/>
    </location>
</feature>
<feature type="active site" description="Nucleophile" evidence="1">
    <location>
        <position position="402"/>
    </location>
</feature>
<feature type="binding site" evidence="1">
    <location>
        <position position="118"/>
    </location>
    <ligand>
        <name>substrate</name>
    </ligand>
</feature>
<feature type="binding site" evidence="1">
    <location>
        <position position="152"/>
    </location>
    <ligand>
        <name>substrate</name>
    </ligand>
</feature>
<feature type="binding site" evidence="1">
    <location>
        <begin position="277"/>
        <end position="278"/>
    </location>
    <ligand>
        <name>substrate</name>
    </ligand>
</feature>
<feature type="binding site" evidence="1">
    <location>
        <position position="293"/>
    </location>
    <ligand>
        <name>substrate</name>
    </ligand>
</feature>
<feature type="binding site" evidence="1 2">
    <location>
        <position position="294"/>
    </location>
    <ligand>
        <name>Ca(2+)</name>
        <dbReference type="ChEBI" id="CHEBI:29108"/>
    </ligand>
</feature>
<feature type="binding site" evidence="1 2">
    <location>
        <position position="298"/>
    </location>
    <ligand>
        <name>Ca(2+)</name>
        <dbReference type="ChEBI" id="CHEBI:29108"/>
    </ligand>
</feature>
<feature type="binding site" evidence="1 2">
    <location>
        <position position="324"/>
    </location>
    <ligand>
        <name>Ca(2+)</name>
        <dbReference type="ChEBI" id="CHEBI:29108"/>
    </ligand>
</feature>
<feature type="binding site" evidence="1 2">
    <location>
        <position position="344"/>
    </location>
    <ligand>
        <name>Ca(2+)</name>
        <dbReference type="ChEBI" id="CHEBI:29108"/>
    </ligand>
</feature>
<feature type="binding site" evidence="1">
    <location>
        <position position="368"/>
    </location>
    <ligand>
        <name>substrate</name>
    </ligand>
</feature>
<feature type="glycosylation site" description="N-linked (GlcNAc...) asparagine; by host" evidence="1">
    <location>
        <position position="50"/>
    </location>
</feature>
<feature type="glycosylation site" description="N-linked (GlcNAc...) asparagine; by host" evidence="1">
    <location>
        <position position="58"/>
    </location>
</feature>
<feature type="glycosylation site" description="N-linked (GlcNAc...) asparagine; by host" evidence="1">
    <location>
        <position position="63"/>
    </location>
</feature>
<feature type="glycosylation site" description="N-linked (GlcNAc...) asparagine; by host" evidence="1">
    <location>
        <position position="68"/>
    </location>
</feature>
<feature type="glycosylation site" description="N-linked (GlcNAc...) asparagine; by host" evidence="1">
    <location>
        <position position="88"/>
    </location>
</feature>
<feature type="glycosylation site" description="N-linked (GlcNAc...) asparagine; by host" evidence="1 2">
    <location>
        <position position="146"/>
    </location>
</feature>
<feature type="glycosylation site" description="N-linked (GlcNAc...) asparagine; by host" evidence="1">
    <location>
        <position position="235"/>
    </location>
</feature>
<feature type="disulfide bond" evidence="1 2">
    <location>
        <begin position="92"/>
        <end position="417"/>
    </location>
</feature>
<feature type="disulfide bond" evidence="1 2">
    <location>
        <begin position="124"/>
        <end position="129"/>
    </location>
</feature>
<feature type="disulfide bond" evidence="1 2">
    <location>
        <begin position="184"/>
        <end position="231"/>
    </location>
</feature>
<feature type="disulfide bond" evidence="1 2">
    <location>
        <begin position="233"/>
        <end position="238"/>
    </location>
</feature>
<feature type="disulfide bond" evidence="1 2">
    <location>
        <begin position="279"/>
        <end position="292"/>
    </location>
</feature>
<feature type="disulfide bond" evidence="1 2">
    <location>
        <begin position="281"/>
        <end position="290"/>
    </location>
</feature>
<feature type="disulfide bond" evidence="1 2">
    <location>
        <begin position="318"/>
        <end position="335"/>
    </location>
</feature>
<feature type="disulfide bond" evidence="1 2">
    <location>
        <begin position="421"/>
        <end position="446"/>
    </location>
</feature>
<feature type="strand" evidence="3">
    <location>
        <begin position="95"/>
        <end position="102"/>
    </location>
</feature>
<feature type="helix" evidence="3">
    <location>
        <begin position="105"/>
        <end position="109"/>
    </location>
</feature>
<feature type="strand" evidence="3">
    <location>
        <begin position="115"/>
        <end position="124"/>
    </location>
</feature>
<feature type="strand" evidence="3">
    <location>
        <begin position="129"/>
        <end position="142"/>
    </location>
</feature>
<feature type="helix" evidence="3">
    <location>
        <begin position="143"/>
        <end position="145"/>
    </location>
</feature>
<feature type="turn" evidence="3">
    <location>
        <begin position="146"/>
        <end position="149"/>
    </location>
</feature>
<feature type="strand" evidence="3">
    <location>
        <begin position="157"/>
        <end position="162"/>
    </location>
</feature>
<feature type="turn" evidence="3">
    <location>
        <begin position="169"/>
        <end position="171"/>
    </location>
</feature>
<feature type="strand" evidence="3">
    <location>
        <begin position="173"/>
        <end position="177"/>
    </location>
</feature>
<feature type="strand" evidence="3">
    <location>
        <begin position="179"/>
        <end position="185"/>
    </location>
</feature>
<feature type="strand" evidence="3">
    <location>
        <begin position="190"/>
        <end position="197"/>
    </location>
</feature>
<feature type="turn" evidence="5">
    <location>
        <begin position="199"/>
        <end position="201"/>
    </location>
</feature>
<feature type="strand" evidence="3">
    <location>
        <begin position="203"/>
        <end position="208"/>
    </location>
</feature>
<feature type="strand" evidence="3">
    <location>
        <begin position="211"/>
        <end position="217"/>
    </location>
</feature>
<feature type="strand" evidence="3">
    <location>
        <begin position="219"/>
        <end position="222"/>
    </location>
</feature>
<feature type="strand" evidence="3">
    <location>
        <begin position="228"/>
        <end position="230"/>
    </location>
</feature>
<feature type="strand" evidence="3">
    <location>
        <begin position="232"/>
        <end position="234"/>
    </location>
</feature>
<feature type="strand" evidence="3">
    <location>
        <begin position="237"/>
        <end position="245"/>
    </location>
</feature>
<feature type="strand" evidence="3">
    <location>
        <begin position="247"/>
        <end position="249"/>
    </location>
</feature>
<feature type="strand" evidence="3">
    <location>
        <begin position="252"/>
        <end position="259"/>
    </location>
</feature>
<feature type="strand" evidence="3">
    <location>
        <begin position="262"/>
        <end position="268"/>
    </location>
</feature>
<feature type="strand" evidence="3">
    <location>
        <begin position="277"/>
        <end position="284"/>
    </location>
</feature>
<feature type="strand" evidence="3">
    <location>
        <begin position="287"/>
        <end position="293"/>
    </location>
</feature>
<feature type="turn" evidence="4">
    <location>
        <begin position="295"/>
        <end position="297"/>
    </location>
</feature>
<feature type="strand" evidence="3">
    <location>
        <begin position="302"/>
        <end position="306"/>
    </location>
</feature>
<feature type="strand" evidence="3">
    <location>
        <begin position="312"/>
        <end position="316"/>
    </location>
</feature>
<feature type="strand" evidence="3">
    <location>
        <begin position="324"/>
        <end position="326"/>
    </location>
</feature>
<feature type="strand" evidence="3">
    <location>
        <begin position="350"/>
        <end position="353"/>
    </location>
</feature>
<feature type="strand" evidence="3">
    <location>
        <begin position="356"/>
        <end position="361"/>
    </location>
</feature>
<feature type="strand" evidence="3">
    <location>
        <begin position="365"/>
        <end position="376"/>
    </location>
</feature>
<feature type="turn" evidence="3">
    <location>
        <begin position="377"/>
        <end position="381"/>
    </location>
</feature>
<feature type="strand" evidence="3">
    <location>
        <begin position="388"/>
        <end position="399"/>
    </location>
</feature>
<feature type="strand" evidence="3">
    <location>
        <begin position="403"/>
        <end position="408"/>
    </location>
</feature>
<feature type="helix" evidence="3">
    <location>
        <begin position="410"/>
        <end position="413"/>
    </location>
</feature>
<feature type="strand" evidence="3">
    <location>
        <begin position="416"/>
        <end position="429"/>
    </location>
</feature>
<feature type="turn" evidence="3">
    <location>
        <begin position="430"/>
        <end position="432"/>
    </location>
</feature>
<feature type="strand" evidence="3">
    <location>
        <begin position="433"/>
        <end position="436"/>
    </location>
</feature>
<feature type="strand" evidence="3">
    <location>
        <begin position="438"/>
        <end position="450"/>
    </location>
</feature>
<feature type="helix" evidence="5">
    <location>
        <begin position="466"/>
        <end position="468"/>
    </location>
</feature>
<name>NRAM_I18A0</name>
<sequence length="469" mass="51406">MNPNQKIITIGSICMVVGIISLILQIGNIISIWVSHSIQTGNQNHPETCNQSIITYENNTWVNQTYVNISNTNVVAGQDATSVILTGNSSLCPISGWAIYSKDNGIRIGSKGDVFVIREPFISCSHLECRTFFLTQGALLNDKHSNGTVKDRSPYRTLMSCPVGEAPSPYNSRFESVAWSASACHDGMGWLTIGISGPDNGAVAVLKYNGIITDTIKSWRNNILRTQESECACVNGSCFTIMTDGPSNGQASYKILKIEKGKVTKSIELNAPNYHYEECSCYPDTGKVMCVCRDNWHGSNRPWVSFDQNLDYQIGYICSGVFGDNPRPNDGTGSCGPVSSNGANGIKGFSFRYDNGVWIGRTKSTSSRSGFEMIWDPNGWTETDSSFSVRQDIVAITDWSGYSGSFVQHPELTGLDCMRPCFWVELIRGQPKENTIWTSGSSISFCGVNSDTVGWSWPDGAELPFSIDK</sequence>
<comment type="function">
    <text evidence="1">Catalyzes the removal of terminal sialic acid residues from viral and cellular glycoconjugates. Cleaves off the terminal sialic acids on the glycosylated HA during virus budding to facilitate virus release. Additionally helps virus spread through the circulation by further removing sialic acids from the cell surface. These cleavages prevent self-aggregation and ensure the efficient spread of the progeny virus from cell to cell. Otherwise, infection would be limited to one round of replication. Described as a receptor-destroying enzyme because it cleaves a terminal sialic acid from the cellular receptors. May facilitate viral invasion of the upper airways by cleaving the sialic acid moieties on the mucin of the airway epithelial cells. Likely to plays a role in the budding process through its association with lipid rafts during intracellular transport. May additionally display a raft-association independent effect on budding. Plays a role in the determination of host range restriction on replication and virulence. Sialidase activity in late endosome/lysosome traffic seems to enhance virus replication.</text>
</comment>
<comment type="catalytic activity">
    <reaction evidence="1">
        <text>Hydrolysis of alpha-(2-&gt;3)-, alpha-(2-&gt;6)-, alpha-(2-&gt;8)- glycosidic linkages of terminal sialic acid residues in oligosaccharides, glycoproteins, glycolipids, colominic acid and synthetic substrates.</text>
        <dbReference type="EC" id="3.2.1.18"/>
    </reaction>
</comment>
<comment type="cofactor">
    <cofactor evidence="1 2">
        <name>Ca(2+)</name>
        <dbReference type="ChEBI" id="CHEBI:29108"/>
    </cofactor>
    <text evidence="2">Binds 1 Ca(2+) ion per subunit.</text>
</comment>
<comment type="activity regulation">
    <text evidence="1">Inhibited by the neuraminidase inhibitors zanamivir (Relenza) and oseltamivir (Tamiflu). These drugs interfere with the release of progeny virus from infected cells and are effective against all influenza strains. Resistance to neuraminidase inhibitors is quite rare.</text>
</comment>
<comment type="subunit">
    <text evidence="1 2">Homotetramer.</text>
</comment>
<comment type="subcellular location">
    <subcellularLocation>
        <location evidence="1">Virion membrane</location>
    </subcellularLocation>
    <subcellularLocation>
        <location evidence="1">Host apical cell membrane</location>
        <topology evidence="1">Single-pass type II membrane protein</topology>
    </subcellularLocation>
    <text evidence="1">Preferentially accumulates at the apical plasma membrane in infected polarized epithelial cells, which is the virus assembly site. Uses lipid rafts for cell surface transport and apical sorting. In the virion, forms a mushroom-shaped spike on the surface of the membrane.</text>
</comment>
<comment type="domain">
    <text evidence="1">Intact N-terminus is essential for virion morphogenesis. Possesses two apical sorting signals, one in the ectodomain, which is likely to be a glycan, and the other in the transmembrane domain. The transmembrane domain also plays a role in lipid raft association.</text>
</comment>
<comment type="PTM">
    <text evidence="1 2">N-glycosylated.</text>
</comment>
<comment type="miscellaneous">
    <text>The influenza A genome consist of 8 RNA segments. Genetic variation of hemagglutinin and/or neuraminidase genes results in the emergence of new influenza strains. The mechanism of variation can be the result of point mutations or the result of genetic reassortment between segments of two different strains.</text>
</comment>
<comment type="miscellaneous">
    <text>South Carolina isolate has been sequenced from formalid fixed-lung tissues of a 21-year-old male which died in 1918 at Ft. Jackson, SC. Brevig Mission isolate has been sequenced from lung tissues of an Inuit woman buried in the permafrost in a gravesite near Brevig Mission, Alaska. This sample was recovered by John Hultin, retired pathologist.</text>
</comment>
<comment type="similarity">
    <text evidence="1">Belongs to the glycosyl hydrolase 34 family.</text>
</comment>
<keyword id="KW-0002">3D-structure</keyword>
<keyword id="KW-0106">Calcium</keyword>
<keyword id="KW-1015">Disulfide bond</keyword>
<keyword id="KW-0325">Glycoprotein</keyword>
<keyword id="KW-0326">Glycosidase</keyword>
<keyword id="KW-1032">Host cell membrane</keyword>
<keyword id="KW-1043">Host membrane</keyword>
<keyword id="KW-0378">Hydrolase</keyword>
<keyword id="KW-0472">Membrane</keyword>
<keyword id="KW-0479">Metal-binding</keyword>
<keyword id="KW-0735">Signal-anchor</keyword>
<keyword id="KW-0812">Transmembrane</keyword>
<keyword id="KW-1133">Transmembrane helix</keyword>
<keyword id="KW-0946">Virion</keyword>
<gene>
    <name evidence="1" type="primary">NA</name>
</gene>
<proteinExistence type="evidence at protein level"/>